<accession>Q7DFV3</accession>
<accession>Q79EL9</accession>
<dbReference type="EMBL" id="U00096">
    <property type="protein sequence ID" value="AAC74256.5"/>
    <property type="molecule type" value="Genomic_DNA"/>
</dbReference>
<dbReference type="EMBL" id="AP009048">
    <property type="protein sequence ID" value="BAA36006.2"/>
    <property type="status" value="ALT_INIT"/>
    <property type="molecule type" value="Genomic_DNA"/>
</dbReference>
<dbReference type="RefSeq" id="NP_415690.5">
    <property type="nucleotide sequence ID" value="NC_000913.3"/>
</dbReference>
<dbReference type="RefSeq" id="WP_000726974.1">
    <property type="nucleotide sequence ID" value="NZ_STEB01000023.1"/>
</dbReference>
<dbReference type="BioGRID" id="4260097">
    <property type="interactions" value="13"/>
</dbReference>
<dbReference type="FunCoup" id="Q7DFV3">
    <property type="interactions" value="28"/>
</dbReference>
<dbReference type="STRING" id="511145.b1172"/>
<dbReference type="PaxDb" id="511145-b1172"/>
<dbReference type="EnsemblBacteria" id="AAC74256">
    <property type="protein sequence ID" value="AAC74256"/>
    <property type="gene ID" value="b1172"/>
</dbReference>
<dbReference type="GeneID" id="945728"/>
<dbReference type="KEGG" id="ecj:JW5178"/>
<dbReference type="KEGG" id="eco:b1172"/>
<dbReference type="KEGG" id="ecoc:C3026_06905"/>
<dbReference type="PATRIC" id="fig|511145.12.peg.1214"/>
<dbReference type="eggNOG" id="ENOG5032XK9">
    <property type="taxonomic scope" value="Bacteria"/>
</dbReference>
<dbReference type="HOGENOM" id="CLU_164687_0_0_6"/>
<dbReference type="InParanoid" id="Q7DFV3"/>
<dbReference type="OMA" id="GMAMDKT"/>
<dbReference type="BioCyc" id="EcoCyc:G6612-MONOMER"/>
<dbReference type="PRO" id="PR:Q7DFV3"/>
<dbReference type="Proteomes" id="UP000000625">
    <property type="component" value="Chromosome"/>
</dbReference>
<dbReference type="HAMAP" id="MF_01455">
    <property type="entry name" value="UPF0757"/>
    <property type="match status" value="1"/>
</dbReference>
<dbReference type="InterPro" id="IPR025693">
    <property type="entry name" value="Gly-zipper_OmpA-like_dom"/>
</dbReference>
<dbReference type="InterPro" id="IPR027367">
    <property type="entry name" value="Gly-zipper_YMGG"/>
</dbReference>
<dbReference type="InterPro" id="IPR022833">
    <property type="entry name" value="UPF0757_YmgG"/>
</dbReference>
<dbReference type="Pfam" id="PF13436">
    <property type="entry name" value="Gly-zipper_OmpA"/>
    <property type="match status" value="1"/>
</dbReference>
<dbReference type="Pfam" id="PF13441">
    <property type="entry name" value="Gly-zipper_YMGG"/>
    <property type="match status" value="1"/>
</dbReference>
<organism>
    <name type="scientific">Escherichia coli (strain K12)</name>
    <dbReference type="NCBI Taxonomy" id="83333"/>
    <lineage>
        <taxon>Bacteria</taxon>
        <taxon>Pseudomonadati</taxon>
        <taxon>Pseudomonadota</taxon>
        <taxon>Gammaproteobacteria</taxon>
        <taxon>Enterobacterales</taxon>
        <taxon>Enterobacteriaceae</taxon>
        <taxon>Escherichia</taxon>
    </lineage>
</organism>
<name>YMGG_ECOLI</name>
<sequence length="114" mass="10807">MKKKILAFGLISALFCSTPAMADMNRTTKGALLGAGVGLLTGNGVNGVLKGAAVGAGVGAVTEKGRDGKNARKGAKVGAAVGAVTGVLTGNGLEGAIKGAVIGGTGGAILGKMK</sequence>
<feature type="chain" id="PRO_0000252220" description="UPF0757 protein YmgG">
    <location>
        <begin position="1"/>
        <end position="114"/>
    </location>
</feature>
<comment type="induction">
    <text evidence="2">By heat shock (shift from 30 to 45 degrees Celsius) (at protein level).</text>
</comment>
<comment type="similarity">
    <text evidence="1">Belongs to the UPF0757 family.</text>
</comment>
<comment type="sequence caution" evidence="3">
    <conflict type="erroneous initiation">
        <sequence resource="EMBL-CDS" id="BAA36006"/>
    </conflict>
    <text>Truncated N-terminus.</text>
</comment>
<keyword id="KW-0903">Direct protein sequencing</keyword>
<keyword id="KW-1185">Reference proteome</keyword>
<proteinExistence type="evidence at protein level"/>
<gene>
    <name evidence="1" type="primary">ymgG</name>
    <name type="ordered locus">b1172</name>
    <name type="ordered locus">JW5178</name>
</gene>
<protein>
    <recommendedName>
        <fullName evidence="1">UPF0757 protein YmgG</fullName>
    </recommendedName>
</protein>
<reference key="1">
    <citation type="journal article" date="1997" name="Science">
        <title>The complete genome sequence of Escherichia coli K-12.</title>
        <authorList>
            <person name="Blattner F.R."/>
            <person name="Plunkett G. III"/>
            <person name="Bloch C.A."/>
            <person name="Perna N.T."/>
            <person name="Burland V."/>
            <person name="Riley M."/>
            <person name="Collado-Vides J."/>
            <person name="Glasner J.D."/>
            <person name="Rode C.K."/>
            <person name="Mayhew G.F."/>
            <person name="Gregor J."/>
            <person name="Davis N.W."/>
            <person name="Kirkpatrick H.A."/>
            <person name="Goeden M.A."/>
            <person name="Rose D.J."/>
            <person name="Mau B."/>
            <person name="Shao Y."/>
        </authorList>
    </citation>
    <scope>NUCLEOTIDE SEQUENCE [LARGE SCALE GENOMIC DNA]</scope>
    <source>
        <strain>K12 / MG1655 / ATCC 47076</strain>
    </source>
</reference>
<reference key="2">
    <citation type="journal article" date="2006" name="Mol. Syst. Biol.">
        <title>Highly accurate genome sequences of Escherichia coli K-12 strains MG1655 and W3110.</title>
        <authorList>
            <person name="Hayashi K."/>
            <person name="Morooka N."/>
            <person name="Yamamoto Y."/>
            <person name="Fujita K."/>
            <person name="Isono K."/>
            <person name="Choi S."/>
            <person name="Ohtsubo E."/>
            <person name="Baba T."/>
            <person name="Wanner B.L."/>
            <person name="Mori H."/>
            <person name="Horiuchi T."/>
        </authorList>
    </citation>
    <scope>NUCLEOTIDE SEQUENCE [LARGE SCALE GENOMIC DNA]</scope>
    <source>
        <strain>K12 / W3110 / ATCC 27325 / DSM 5911</strain>
    </source>
</reference>
<reference key="3">
    <citation type="journal article" date="2018" name="Biochemistry">
        <title>Comparative membrane proteomics reveals a nonannotated E. coli heat shock protein.</title>
        <authorList>
            <person name="Yuan P."/>
            <person name="D'Lima N.G."/>
            <person name="Slavoff S.A."/>
        </authorList>
    </citation>
    <scope>PROTEIN SEQUENCE OF 51-64</scope>
    <scope>IDENTIFICATION</scope>
    <scope>INDUCTION BY HEAT SHOCK</scope>
    <source>
        <strain>K12 / MG1655 / ATCC 47076</strain>
    </source>
</reference>
<evidence type="ECO:0000255" key="1">
    <source>
        <dbReference type="HAMAP-Rule" id="MF_01455"/>
    </source>
</evidence>
<evidence type="ECO:0000269" key="2">
    <source>
    </source>
</evidence>
<evidence type="ECO:0000305" key="3"/>